<protein>
    <recommendedName>
        <fullName evidence="1">Methionine import ATP-binding protein MetN 3</fullName>
        <ecNumber evidence="1">7.4.2.11</ecNumber>
    </recommendedName>
</protein>
<keyword id="KW-0029">Amino-acid transport</keyword>
<keyword id="KW-0067">ATP-binding</keyword>
<keyword id="KW-1003">Cell membrane</keyword>
<keyword id="KW-0472">Membrane</keyword>
<keyword id="KW-0547">Nucleotide-binding</keyword>
<keyword id="KW-1185">Reference proteome</keyword>
<keyword id="KW-1278">Translocase</keyword>
<keyword id="KW-0813">Transport</keyword>
<accession>Q5WDP1</accession>
<gene>
    <name evidence="1" type="primary">metN3</name>
    <name type="ordered locus">ABC2985</name>
</gene>
<proteinExistence type="inferred from homology"/>
<name>METN3_SHOC1</name>
<evidence type="ECO:0000255" key="1">
    <source>
        <dbReference type="HAMAP-Rule" id="MF_01719"/>
    </source>
</evidence>
<feature type="chain" id="PRO_0000270243" description="Methionine import ATP-binding protein MetN 3">
    <location>
        <begin position="1"/>
        <end position="342"/>
    </location>
</feature>
<feature type="domain" description="ABC transporter" evidence="1">
    <location>
        <begin position="2"/>
        <end position="241"/>
    </location>
</feature>
<feature type="binding site" evidence="1">
    <location>
        <begin position="38"/>
        <end position="45"/>
    </location>
    <ligand>
        <name>ATP</name>
        <dbReference type="ChEBI" id="CHEBI:30616"/>
    </ligand>
</feature>
<dbReference type="EC" id="7.4.2.11" evidence="1"/>
<dbReference type="EMBL" id="AP006627">
    <property type="protein sequence ID" value="BAD65519.1"/>
    <property type="molecule type" value="Genomic_DNA"/>
</dbReference>
<dbReference type="RefSeq" id="WP_011247827.1">
    <property type="nucleotide sequence ID" value="NC_006582.1"/>
</dbReference>
<dbReference type="SMR" id="Q5WDP1"/>
<dbReference type="STRING" id="66692.ABC2985"/>
<dbReference type="KEGG" id="bcl:ABC2985"/>
<dbReference type="eggNOG" id="COG1135">
    <property type="taxonomic scope" value="Bacteria"/>
</dbReference>
<dbReference type="HOGENOM" id="CLU_000604_1_3_9"/>
<dbReference type="OrthoDB" id="9802264at2"/>
<dbReference type="Proteomes" id="UP000001168">
    <property type="component" value="Chromosome"/>
</dbReference>
<dbReference type="GO" id="GO:0005886">
    <property type="term" value="C:plasma membrane"/>
    <property type="evidence" value="ECO:0007669"/>
    <property type="project" value="UniProtKB-SubCell"/>
</dbReference>
<dbReference type="GO" id="GO:0033232">
    <property type="term" value="F:ABC-type D-methionine transporter activity"/>
    <property type="evidence" value="ECO:0007669"/>
    <property type="project" value="UniProtKB-EC"/>
</dbReference>
<dbReference type="GO" id="GO:0005524">
    <property type="term" value="F:ATP binding"/>
    <property type="evidence" value="ECO:0007669"/>
    <property type="project" value="UniProtKB-KW"/>
</dbReference>
<dbReference type="GO" id="GO:0016887">
    <property type="term" value="F:ATP hydrolysis activity"/>
    <property type="evidence" value="ECO:0007669"/>
    <property type="project" value="InterPro"/>
</dbReference>
<dbReference type="CDD" id="cd03258">
    <property type="entry name" value="ABC_MetN_methionine_transporter"/>
    <property type="match status" value="1"/>
</dbReference>
<dbReference type="FunFam" id="3.40.50.300:FF:000233">
    <property type="entry name" value="Methionine import ATP-binding protein MetN"/>
    <property type="match status" value="1"/>
</dbReference>
<dbReference type="Gene3D" id="3.30.70.260">
    <property type="match status" value="1"/>
</dbReference>
<dbReference type="Gene3D" id="3.40.50.300">
    <property type="entry name" value="P-loop containing nucleotide triphosphate hydrolases"/>
    <property type="match status" value="1"/>
</dbReference>
<dbReference type="InterPro" id="IPR003593">
    <property type="entry name" value="AAA+_ATPase"/>
</dbReference>
<dbReference type="InterPro" id="IPR003439">
    <property type="entry name" value="ABC_transporter-like_ATP-bd"/>
</dbReference>
<dbReference type="InterPro" id="IPR017871">
    <property type="entry name" value="ABC_transporter-like_CS"/>
</dbReference>
<dbReference type="InterPro" id="IPR045865">
    <property type="entry name" value="ACT-like_dom_sf"/>
</dbReference>
<dbReference type="InterPro" id="IPR041701">
    <property type="entry name" value="MetN_ABC"/>
</dbReference>
<dbReference type="InterPro" id="IPR050086">
    <property type="entry name" value="MetN_ABC_transporter-like"/>
</dbReference>
<dbReference type="InterPro" id="IPR018449">
    <property type="entry name" value="NIL_domain"/>
</dbReference>
<dbReference type="InterPro" id="IPR027417">
    <property type="entry name" value="P-loop_NTPase"/>
</dbReference>
<dbReference type="PANTHER" id="PTHR43166">
    <property type="entry name" value="AMINO ACID IMPORT ATP-BINDING PROTEIN"/>
    <property type="match status" value="1"/>
</dbReference>
<dbReference type="PANTHER" id="PTHR43166:SF36">
    <property type="entry name" value="METHIONINE IMPORT ATP-BINDING PROTEIN METN 2"/>
    <property type="match status" value="1"/>
</dbReference>
<dbReference type="Pfam" id="PF00005">
    <property type="entry name" value="ABC_tran"/>
    <property type="match status" value="1"/>
</dbReference>
<dbReference type="Pfam" id="PF09383">
    <property type="entry name" value="NIL"/>
    <property type="match status" value="1"/>
</dbReference>
<dbReference type="SMART" id="SM00382">
    <property type="entry name" value="AAA"/>
    <property type="match status" value="1"/>
</dbReference>
<dbReference type="SMART" id="SM00930">
    <property type="entry name" value="NIL"/>
    <property type="match status" value="1"/>
</dbReference>
<dbReference type="SUPFAM" id="SSF55021">
    <property type="entry name" value="ACT-like"/>
    <property type="match status" value="1"/>
</dbReference>
<dbReference type="SUPFAM" id="SSF52540">
    <property type="entry name" value="P-loop containing nucleoside triphosphate hydrolases"/>
    <property type="match status" value="1"/>
</dbReference>
<dbReference type="PROSITE" id="PS00211">
    <property type="entry name" value="ABC_TRANSPORTER_1"/>
    <property type="match status" value="1"/>
</dbReference>
<dbReference type="PROSITE" id="PS50893">
    <property type="entry name" value="ABC_TRANSPORTER_2"/>
    <property type="match status" value="1"/>
</dbReference>
<dbReference type="PROSITE" id="PS51264">
    <property type="entry name" value="METN"/>
    <property type="match status" value="1"/>
</dbReference>
<reference key="1">
    <citation type="submission" date="2003-10" db="EMBL/GenBank/DDBJ databases">
        <title>The complete genome sequence of the alkaliphilic Bacillus clausii KSM-K16.</title>
        <authorList>
            <person name="Takaki Y."/>
            <person name="Kageyama Y."/>
            <person name="Shimamura S."/>
            <person name="Suzuki H."/>
            <person name="Nishi S."/>
            <person name="Hatada Y."/>
            <person name="Kawai S."/>
            <person name="Ito S."/>
            <person name="Horikoshi K."/>
        </authorList>
    </citation>
    <scope>NUCLEOTIDE SEQUENCE [LARGE SCALE GENOMIC DNA]</scope>
    <source>
        <strain>KSM-K16</strain>
    </source>
</reference>
<sequence length="342" mass="37803">MISLKGISKTFKTKNGAVQAVDNVNLEIEAGQIFGIIGYSGAGKSTLIRLLNLLEKPTEGSVKIDGKALSSLTPSKLRAARQEIGMIFQHFNLLWSRTVRQNISFPLEVAGVPAAQRKKRVEELIELVGLHGRGDSYPSQLSGGQKQRVGIARALANNPKVLLCDEATSALDPKTTDSILDLLLDINEKLNLTIVLITHEMHVIQKICHQVAVMENGKIVEQGPVIDVFRKPKEQMTKEFVKQLAQTGEEEQSLWHLLDEKSDGTIVSLTFVGNPAEEQLVTELIRRFPIDISILQGNISKLQQGSYGKLYLRLLGATNEIEAALAYIRGKEIDVEVIEHDR</sequence>
<comment type="function">
    <text evidence="1">Part of the ABC transporter complex MetNIQ involved in methionine import. Responsible for energy coupling to the transport system.</text>
</comment>
<comment type="catalytic activity">
    <reaction evidence="1">
        <text>L-methionine(out) + ATP + H2O = L-methionine(in) + ADP + phosphate + H(+)</text>
        <dbReference type="Rhea" id="RHEA:29779"/>
        <dbReference type="ChEBI" id="CHEBI:15377"/>
        <dbReference type="ChEBI" id="CHEBI:15378"/>
        <dbReference type="ChEBI" id="CHEBI:30616"/>
        <dbReference type="ChEBI" id="CHEBI:43474"/>
        <dbReference type="ChEBI" id="CHEBI:57844"/>
        <dbReference type="ChEBI" id="CHEBI:456216"/>
        <dbReference type="EC" id="7.4.2.11"/>
    </reaction>
</comment>
<comment type="catalytic activity">
    <reaction evidence="1">
        <text>D-methionine(out) + ATP + H2O = D-methionine(in) + ADP + phosphate + H(+)</text>
        <dbReference type="Rhea" id="RHEA:29767"/>
        <dbReference type="ChEBI" id="CHEBI:15377"/>
        <dbReference type="ChEBI" id="CHEBI:15378"/>
        <dbReference type="ChEBI" id="CHEBI:30616"/>
        <dbReference type="ChEBI" id="CHEBI:43474"/>
        <dbReference type="ChEBI" id="CHEBI:57932"/>
        <dbReference type="ChEBI" id="CHEBI:456216"/>
        <dbReference type="EC" id="7.4.2.11"/>
    </reaction>
</comment>
<comment type="subunit">
    <text evidence="1">The complex is composed of two ATP-binding proteins (MetN), two transmembrane proteins (MetI) and a solute-binding protein (MetQ).</text>
</comment>
<comment type="subcellular location">
    <subcellularLocation>
        <location evidence="1">Cell membrane</location>
        <topology evidence="1">Peripheral membrane protein</topology>
    </subcellularLocation>
</comment>
<comment type="similarity">
    <text evidence="1">Belongs to the ABC transporter superfamily. Methionine importer (TC 3.A.1.24) family.</text>
</comment>
<organism>
    <name type="scientific">Shouchella clausii (strain KSM-K16)</name>
    <name type="common">Alkalihalobacillus clausii</name>
    <dbReference type="NCBI Taxonomy" id="66692"/>
    <lineage>
        <taxon>Bacteria</taxon>
        <taxon>Bacillati</taxon>
        <taxon>Bacillota</taxon>
        <taxon>Bacilli</taxon>
        <taxon>Bacillales</taxon>
        <taxon>Bacillaceae</taxon>
        <taxon>Shouchella</taxon>
    </lineage>
</organism>